<name>RL24_NEIG1</name>
<comment type="function">
    <text evidence="1">One of two assembly initiator proteins, it binds directly to the 5'-end of the 23S rRNA, where it nucleates assembly of the 50S subunit.</text>
</comment>
<comment type="function">
    <text evidence="1">One of the proteins that surrounds the polypeptide exit tunnel on the outside of the subunit.</text>
</comment>
<comment type="subunit">
    <text evidence="1">Part of the 50S ribosomal subunit.</text>
</comment>
<comment type="similarity">
    <text evidence="1">Belongs to the universal ribosomal protein uL24 family.</text>
</comment>
<feature type="chain" id="PRO_0000241626" description="Large ribosomal subunit protein uL24">
    <location>
        <begin position="1"/>
        <end position="107"/>
    </location>
</feature>
<organism>
    <name type="scientific">Neisseria gonorrhoeae (strain ATCC 700825 / FA 1090)</name>
    <dbReference type="NCBI Taxonomy" id="242231"/>
    <lineage>
        <taxon>Bacteria</taxon>
        <taxon>Pseudomonadati</taxon>
        <taxon>Pseudomonadota</taxon>
        <taxon>Betaproteobacteria</taxon>
        <taxon>Neisseriales</taxon>
        <taxon>Neisseriaceae</taxon>
        <taxon>Neisseria</taxon>
    </lineage>
</organism>
<reference key="1">
    <citation type="submission" date="2003-03" db="EMBL/GenBank/DDBJ databases">
        <title>The complete genome sequence of Neisseria gonorrhoeae.</title>
        <authorList>
            <person name="Lewis L.A."/>
            <person name="Gillaspy A.F."/>
            <person name="McLaughlin R.E."/>
            <person name="Gipson M."/>
            <person name="Ducey T.F."/>
            <person name="Ownbey T."/>
            <person name="Hartman K."/>
            <person name="Nydick C."/>
            <person name="Carson M.B."/>
            <person name="Vaughn J."/>
            <person name="Thomson C."/>
            <person name="Song L."/>
            <person name="Lin S."/>
            <person name="Yuan X."/>
            <person name="Najar F."/>
            <person name="Zhan M."/>
            <person name="Ren Q."/>
            <person name="Zhu H."/>
            <person name="Qi S."/>
            <person name="Kenton S.M."/>
            <person name="Lai H."/>
            <person name="White J.D."/>
            <person name="Clifton S."/>
            <person name="Roe B.A."/>
            <person name="Dyer D.W."/>
        </authorList>
    </citation>
    <scope>NUCLEOTIDE SEQUENCE [LARGE SCALE GENOMIC DNA]</scope>
    <source>
        <strain>ATCC 700825 / FA 1090</strain>
    </source>
</reference>
<keyword id="KW-1185">Reference proteome</keyword>
<keyword id="KW-0687">Ribonucleoprotein</keyword>
<keyword id="KW-0689">Ribosomal protein</keyword>
<keyword id="KW-0694">RNA-binding</keyword>
<keyword id="KW-0699">rRNA-binding</keyword>
<protein>
    <recommendedName>
        <fullName evidence="1">Large ribosomal subunit protein uL24</fullName>
    </recommendedName>
    <alternativeName>
        <fullName evidence="2">50S ribosomal protein L24</fullName>
    </alternativeName>
</protein>
<gene>
    <name evidence="1" type="primary">rplX</name>
    <name type="ordered locus">NGO_1828</name>
</gene>
<proteinExistence type="inferred from homology"/>
<evidence type="ECO:0000255" key="1">
    <source>
        <dbReference type="HAMAP-Rule" id="MF_01326"/>
    </source>
</evidence>
<evidence type="ECO:0000305" key="2"/>
<accession>Q5F5T8</accession>
<dbReference type="EMBL" id="AE004969">
    <property type="protein sequence ID" value="AAW90449.1"/>
    <property type="molecule type" value="Genomic_DNA"/>
</dbReference>
<dbReference type="RefSeq" id="WP_003690072.1">
    <property type="nucleotide sequence ID" value="NC_002946.2"/>
</dbReference>
<dbReference type="RefSeq" id="YP_208861.1">
    <property type="nucleotide sequence ID" value="NC_002946.2"/>
</dbReference>
<dbReference type="SMR" id="Q5F5T8"/>
<dbReference type="STRING" id="242231.NGO_1828"/>
<dbReference type="GeneID" id="66754306"/>
<dbReference type="KEGG" id="ngo:NGO_1828"/>
<dbReference type="PATRIC" id="fig|242231.10.peg.2198"/>
<dbReference type="HOGENOM" id="CLU_093315_2_2_4"/>
<dbReference type="Proteomes" id="UP000000535">
    <property type="component" value="Chromosome"/>
</dbReference>
<dbReference type="GO" id="GO:1990904">
    <property type="term" value="C:ribonucleoprotein complex"/>
    <property type="evidence" value="ECO:0007669"/>
    <property type="project" value="UniProtKB-KW"/>
</dbReference>
<dbReference type="GO" id="GO:0005840">
    <property type="term" value="C:ribosome"/>
    <property type="evidence" value="ECO:0007669"/>
    <property type="project" value="UniProtKB-KW"/>
</dbReference>
<dbReference type="GO" id="GO:0019843">
    <property type="term" value="F:rRNA binding"/>
    <property type="evidence" value="ECO:0007669"/>
    <property type="project" value="UniProtKB-UniRule"/>
</dbReference>
<dbReference type="GO" id="GO:0003735">
    <property type="term" value="F:structural constituent of ribosome"/>
    <property type="evidence" value="ECO:0007669"/>
    <property type="project" value="InterPro"/>
</dbReference>
<dbReference type="GO" id="GO:0006412">
    <property type="term" value="P:translation"/>
    <property type="evidence" value="ECO:0007669"/>
    <property type="project" value="UniProtKB-UniRule"/>
</dbReference>
<dbReference type="CDD" id="cd06089">
    <property type="entry name" value="KOW_RPL26"/>
    <property type="match status" value="1"/>
</dbReference>
<dbReference type="FunFam" id="2.30.30.30:FF:000004">
    <property type="entry name" value="50S ribosomal protein L24"/>
    <property type="match status" value="1"/>
</dbReference>
<dbReference type="Gene3D" id="2.30.30.30">
    <property type="match status" value="1"/>
</dbReference>
<dbReference type="HAMAP" id="MF_01326_B">
    <property type="entry name" value="Ribosomal_uL24_B"/>
    <property type="match status" value="1"/>
</dbReference>
<dbReference type="InterPro" id="IPR005824">
    <property type="entry name" value="KOW"/>
</dbReference>
<dbReference type="InterPro" id="IPR014722">
    <property type="entry name" value="Rib_uL2_dom2"/>
</dbReference>
<dbReference type="InterPro" id="IPR003256">
    <property type="entry name" value="Ribosomal_uL24"/>
</dbReference>
<dbReference type="InterPro" id="IPR005825">
    <property type="entry name" value="Ribosomal_uL24_CS"/>
</dbReference>
<dbReference type="InterPro" id="IPR041988">
    <property type="entry name" value="Ribosomal_uL24_KOW"/>
</dbReference>
<dbReference type="InterPro" id="IPR008991">
    <property type="entry name" value="Translation_prot_SH3-like_sf"/>
</dbReference>
<dbReference type="NCBIfam" id="TIGR01079">
    <property type="entry name" value="rplX_bact"/>
    <property type="match status" value="1"/>
</dbReference>
<dbReference type="PANTHER" id="PTHR12903">
    <property type="entry name" value="MITOCHONDRIAL RIBOSOMAL PROTEIN L24"/>
    <property type="match status" value="1"/>
</dbReference>
<dbReference type="Pfam" id="PF00467">
    <property type="entry name" value="KOW"/>
    <property type="match status" value="1"/>
</dbReference>
<dbReference type="Pfam" id="PF17136">
    <property type="entry name" value="ribosomal_L24"/>
    <property type="match status" value="1"/>
</dbReference>
<dbReference type="SMART" id="SM00739">
    <property type="entry name" value="KOW"/>
    <property type="match status" value="1"/>
</dbReference>
<dbReference type="SUPFAM" id="SSF50104">
    <property type="entry name" value="Translation proteins SH3-like domain"/>
    <property type="match status" value="1"/>
</dbReference>
<dbReference type="PROSITE" id="PS01108">
    <property type="entry name" value="RIBOSOMAL_L24"/>
    <property type="match status" value="1"/>
</dbReference>
<sequence length="107" mass="11608">MNKIIKGDRVVVIAGKDKGKQGQVVRVLGGKVVVEGVNVVKRHQKPNPMRGIKGGIITKEMPLDISNIAILNPETNKADRVGIKLIENEGKVKRVRFFKSNGSIIGA</sequence>